<evidence type="ECO:0000255" key="1">
    <source>
        <dbReference type="HAMAP-Rule" id="MF_00037"/>
    </source>
</evidence>
<organism>
    <name type="scientific">Protochlamydia amoebophila (strain UWE25)</name>
    <dbReference type="NCBI Taxonomy" id="264201"/>
    <lineage>
        <taxon>Bacteria</taxon>
        <taxon>Pseudomonadati</taxon>
        <taxon>Chlamydiota</taxon>
        <taxon>Chlamydiia</taxon>
        <taxon>Parachlamydiales</taxon>
        <taxon>Parachlamydiaceae</taxon>
        <taxon>Candidatus Protochlamydia</taxon>
    </lineage>
</organism>
<protein>
    <recommendedName>
        <fullName evidence="1">UDP-N-acetylenolpyruvoylglucosamine reductase</fullName>
        <ecNumber evidence="1">1.3.1.98</ecNumber>
    </recommendedName>
    <alternativeName>
        <fullName evidence="1">UDP-N-acetylmuramate dehydrogenase</fullName>
    </alternativeName>
</protein>
<name>MURB_PARUW</name>
<reference key="1">
    <citation type="journal article" date="2004" name="Science">
        <title>Illuminating the evolutionary history of chlamydiae.</title>
        <authorList>
            <person name="Horn M."/>
            <person name="Collingro A."/>
            <person name="Schmitz-Esser S."/>
            <person name="Beier C.L."/>
            <person name="Purkhold U."/>
            <person name="Fartmann B."/>
            <person name="Brandt P."/>
            <person name="Nyakatura G.J."/>
            <person name="Droege M."/>
            <person name="Frishman D."/>
            <person name="Rattei T."/>
            <person name="Mewes H.-W."/>
            <person name="Wagner M."/>
        </authorList>
    </citation>
    <scope>NUCLEOTIDE SEQUENCE [LARGE SCALE GENOMIC DNA]</scope>
    <source>
        <strain>UWE25</strain>
    </source>
</reference>
<gene>
    <name evidence="1" type="primary">murB</name>
    <name type="ordered locus">pc1624</name>
</gene>
<keyword id="KW-0131">Cell cycle</keyword>
<keyword id="KW-0132">Cell division</keyword>
<keyword id="KW-0133">Cell shape</keyword>
<keyword id="KW-0961">Cell wall biogenesis/degradation</keyword>
<keyword id="KW-0963">Cytoplasm</keyword>
<keyword id="KW-0274">FAD</keyword>
<keyword id="KW-0285">Flavoprotein</keyword>
<keyword id="KW-0521">NADP</keyword>
<keyword id="KW-0560">Oxidoreductase</keyword>
<keyword id="KW-0573">Peptidoglycan synthesis</keyword>
<keyword id="KW-1185">Reference proteome</keyword>
<dbReference type="EC" id="1.3.1.98" evidence="1"/>
<dbReference type="EMBL" id="BX908798">
    <property type="protein sequence ID" value="CAF24348.1"/>
    <property type="molecule type" value="Genomic_DNA"/>
</dbReference>
<dbReference type="RefSeq" id="WP_011176170.1">
    <property type="nucleotide sequence ID" value="NC_005861.2"/>
</dbReference>
<dbReference type="SMR" id="Q6MAQ1"/>
<dbReference type="STRING" id="264201.pc1624"/>
<dbReference type="eggNOG" id="COG0812">
    <property type="taxonomic scope" value="Bacteria"/>
</dbReference>
<dbReference type="HOGENOM" id="CLU_035304_1_1_0"/>
<dbReference type="UniPathway" id="UPA00219"/>
<dbReference type="Proteomes" id="UP000000529">
    <property type="component" value="Chromosome"/>
</dbReference>
<dbReference type="GO" id="GO:0005829">
    <property type="term" value="C:cytosol"/>
    <property type="evidence" value="ECO:0007669"/>
    <property type="project" value="TreeGrafter"/>
</dbReference>
<dbReference type="GO" id="GO:0071949">
    <property type="term" value="F:FAD binding"/>
    <property type="evidence" value="ECO:0007669"/>
    <property type="project" value="InterPro"/>
</dbReference>
<dbReference type="GO" id="GO:0008762">
    <property type="term" value="F:UDP-N-acetylmuramate dehydrogenase activity"/>
    <property type="evidence" value="ECO:0007669"/>
    <property type="project" value="UniProtKB-UniRule"/>
</dbReference>
<dbReference type="GO" id="GO:0051301">
    <property type="term" value="P:cell division"/>
    <property type="evidence" value="ECO:0007669"/>
    <property type="project" value="UniProtKB-KW"/>
</dbReference>
<dbReference type="GO" id="GO:0071555">
    <property type="term" value="P:cell wall organization"/>
    <property type="evidence" value="ECO:0007669"/>
    <property type="project" value="UniProtKB-KW"/>
</dbReference>
<dbReference type="GO" id="GO:0009252">
    <property type="term" value="P:peptidoglycan biosynthetic process"/>
    <property type="evidence" value="ECO:0007669"/>
    <property type="project" value="UniProtKB-UniRule"/>
</dbReference>
<dbReference type="GO" id="GO:0008360">
    <property type="term" value="P:regulation of cell shape"/>
    <property type="evidence" value="ECO:0007669"/>
    <property type="project" value="UniProtKB-KW"/>
</dbReference>
<dbReference type="Gene3D" id="3.30.465.10">
    <property type="match status" value="1"/>
</dbReference>
<dbReference type="Gene3D" id="3.90.78.10">
    <property type="entry name" value="UDP-N-acetylenolpyruvoylglucosamine reductase, C-terminal domain"/>
    <property type="match status" value="1"/>
</dbReference>
<dbReference type="Gene3D" id="3.30.43.10">
    <property type="entry name" value="Uridine Diphospho-n-acetylenolpyruvylglucosamine Reductase, domain 2"/>
    <property type="match status" value="1"/>
</dbReference>
<dbReference type="HAMAP" id="MF_00037">
    <property type="entry name" value="MurB"/>
    <property type="match status" value="1"/>
</dbReference>
<dbReference type="InterPro" id="IPR016166">
    <property type="entry name" value="FAD-bd_PCMH"/>
</dbReference>
<dbReference type="InterPro" id="IPR036318">
    <property type="entry name" value="FAD-bd_PCMH-like_sf"/>
</dbReference>
<dbReference type="InterPro" id="IPR016167">
    <property type="entry name" value="FAD-bd_PCMH_sub1"/>
</dbReference>
<dbReference type="InterPro" id="IPR016169">
    <property type="entry name" value="FAD-bd_PCMH_sub2"/>
</dbReference>
<dbReference type="InterPro" id="IPR003170">
    <property type="entry name" value="MurB"/>
</dbReference>
<dbReference type="InterPro" id="IPR011601">
    <property type="entry name" value="MurB_C"/>
</dbReference>
<dbReference type="InterPro" id="IPR036635">
    <property type="entry name" value="MurB_C_sf"/>
</dbReference>
<dbReference type="InterPro" id="IPR006094">
    <property type="entry name" value="Oxid_FAD_bind_N"/>
</dbReference>
<dbReference type="NCBIfam" id="TIGR00179">
    <property type="entry name" value="murB"/>
    <property type="match status" value="1"/>
</dbReference>
<dbReference type="NCBIfam" id="NF010480">
    <property type="entry name" value="PRK13905.1"/>
    <property type="match status" value="1"/>
</dbReference>
<dbReference type="PANTHER" id="PTHR21071">
    <property type="entry name" value="UDP-N-ACETYLENOLPYRUVOYLGLUCOSAMINE REDUCTASE"/>
    <property type="match status" value="1"/>
</dbReference>
<dbReference type="PANTHER" id="PTHR21071:SF4">
    <property type="entry name" value="UDP-N-ACETYLENOLPYRUVOYLGLUCOSAMINE REDUCTASE"/>
    <property type="match status" value="1"/>
</dbReference>
<dbReference type="Pfam" id="PF01565">
    <property type="entry name" value="FAD_binding_4"/>
    <property type="match status" value="1"/>
</dbReference>
<dbReference type="Pfam" id="PF02873">
    <property type="entry name" value="MurB_C"/>
    <property type="match status" value="1"/>
</dbReference>
<dbReference type="SUPFAM" id="SSF56176">
    <property type="entry name" value="FAD-binding/transporter-associated domain-like"/>
    <property type="match status" value="1"/>
</dbReference>
<dbReference type="SUPFAM" id="SSF56194">
    <property type="entry name" value="Uridine diphospho-N-Acetylenolpyruvylglucosamine reductase, MurB, C-terminal domain"/>
    <property type="match status" value="1"/>
</dbReference>
<dbReference type="PROSITE" id="PS51387">
    <property type="entry name" value="FAD_PCMH"/>
    <property type="match status" value="1"/>
</dbReference>
<feature type="chain" id="PRO_0000224700" description="UDP-N-acetylenolpyruvoylglucosamine reductase">
    <location>
        <begin position="1"/>
        <end position="299"/>
    </location>
</feature>
<feature type="domain" description="FAD-binding PCMH-type" evidence="1">
    <location>
        <begin position="26"/>
        <end position="191"/>
    </location>
</feature>
<feature type="active site" evidence="1">
    <location>
        <position position="170"/>
    </location>
</feature>
<feature type="active site" description="Proton donor" evidence="1">
    <location>
        <position position="218"/>
    </location>
</feature>
<feature type="active site" evidence="1">
    <location>
        <position position="288"/>
    </location>
</feature>
<sequence>MKYSIPMKIPNQYQTNCLLKEITTFGIGGPAKYFVEVRTIPDMQKTLLFCYQNEIPYFILGKGSNSLFDDRGFNGLVIANRIDCLEKNEKGCWHVGAGYSFSLLGSQTARQGWEGLEFASGIPGSVGGAIFMNAGANGRETADNLISVDFVDEQGKLIHFKRSNLNFQYRTSPFQNIKGAIVSATFQLNASQEARQKQLSIIDYRKKTQPYKAKSAGCVFRNPNCGHAGALIEQAGLKETKIGGAAVSSVHANFIINSGLATSQDVLALIRLIQETVKAKTGAELESEIRYVPYDVNQG</sequence>
<proteinExistence type="inferred from homology"/>
<accession>Q6MAQ1</accession>
<comment type="function">
    <text evidence="1">Cell wall formation.</text>
</comment>
<comment type="catalytic activity">
    <reaction evidence="1">
        <text>UDP-N-acetyl-alpha-D-muramate + NADP(+) = UDP-N-acetyl-3-O-(1-carboxyvinyl)-alpha-D-glucosamine + NADPH + H(+)</text>
        <dbReference type="Rhea" id="RHEA:12248"/>
        <dbReference type="ChEBI" id="CHEBI:15378"/>
        <dbReference type="ChEBI" id="CHEBI:57783"/>
        <dbReference type="ChEBI" id="CHEBI:58349"/>
        <dbReference type="ChEBI" id="CHEBI:68483"/>
        <dbReference type="ChEBI" id="CHEBI:70757"/>
        <dbReference type="EC" id="1.3.1.98"/>
    </reaction>
</comment>
<comment type="cofactor">
    <cofactor evidence="1">
        <name>FAD</name>
        <dbReference type="ChEBI" id="CHEBI:57692"/>
    </cofactor>
</comment>
<comment type="pathway">
    <text evidence="1">Cell wall biogenesis; peptidoglycan biosynthesis.</text>
</comment>
<comment type="subcellular location">
    <subcellularLocation>
        <location evidence="1">Cytoplasm</location>
    </subcellularLocation>
</comment>
<comment type="similarity">
    <text evidence="1">Belongs to the MurB family.</text>
</comment>